<keyword id="KW-0297">G-protein coupled receptor</keyword>
<keyword id="KW-0325">Glycoprotein</keyword>
<keyword id="KW-0472">Membrane</keyword>
<keyword id="KW-0675">Receptor</keyword>
<keyword id="KW-1185">Reference proteome</keyword>
<keyword id="KW-0716">Sensory transduction</keyword>
<keyword id="KW-0919">Taste</keyword>
<keyword id="KW-0807">Transducer</keyword>
<keyword id="KW-0812">Transmembrane</keyword>
<keyword id="KW-1133">Transmembrane helix</keyword>
<organism>
    <name type="scientific">Mus musculus</name>
    <name type="common">Mouse</name>
    <dbReference type="NCBI Taxonomy" id="10090"/>
    <lineage>
        <taxon>Eukaryota</taxon>
        <taxon>Metazoa</taxon>
        <taxon>Chordata</taxon>
        <taxon>Craniata</taxon>
        <taxon>Vertebrata</taxon>
        <taxon>Euteleostomi</taxon>
        <taxon>Mammalia</taxon>
        <taxon>Eutheria</taxon>
        <taxon>Euarchontoglires</taxon>
        <taxon>Glires</taxon>
        <taxon>Rodentia</taxon>
        <taxon>Myomorpha</taxon>
        <taxon>Muroidea</taxon>
        <taxon>Muridae</taxon>
        <taxon>Murinae</taxon>
        <taxon>Mus</taxon>
        <taxon>Mus</taxon>
    </lineage>
</organism>
<comment type="function">
    <text>Gustducin-coupled receptor implicated in the perception of bitter compounds in the oral cavity and the gastrointestinal tract. Signals through PLCB2 and the calcium-regulated cation channel TRPM5.</text>
</comment>
<comment type="subcellular location">
    <subcellularLocation>
        <location>Membrane</location>
        <topology>Multi-pass membrane protein</topology>
    </subcellularLocation>
</comment>
<comment type="tissue specificity">
    <text>Expressed in subsets of taste receptor cells of the tongue and palate epithelium and exclusively in gustducin-positive cells. Expressed in 15% taste bud cells in circumvallate and foliate papillae but only in 2% in fungiform papillae. Expressed in gastric and duodenal tissues.</text>
</comment>
<comment type="miscellaneous">
    <text>Several bitter taste receptors are expressed in a single taste receptor cell.</text>
</comment>
<comment type="similarity">
    <text evidence="2">Belongs to the G-protein coupled receptor T2R family.</text>
</comment>
<sequence>MTYETDTTLMLVAVGEALVGILGNAFIALVNFMGWMKNRKIASIDLILSSVAMSRICLQCIILLDCIILVQYPDTYNRGKEMRTVDFFWTLTNHLSVWFATCLSIFYLFKIANFFHPLFLWIKWRIDKLILRTLLACVIISLCFSLPVTENLSDDFRRCVKTKERINSTLRCKVNKAGHASVKVNLNLVMLFPFSVSLVSFLLLILSLWRHTRQIQLSVTGYKDPSTTAHVKAMKAVISFLALFVVYCLAFLIATSSYFMPESELAVIWGELIALIYPSSHSFILILGSSKLKQASVRVLCRVKTMLKGKKY</sequence>
<feature type="chain" id="PRO_0000082217" description="Taste receptor type 2 member 7">
    <location>
        <begin position="1"/>
        <end position="312"/>
    </location>
</feature>
<feature type="topological domain" description="Extracellular" evidence="1">
    <location>
        <begin position="1"/>
        <end position="9"/>
    </location>
</feature>
<feature type="transmembrane region" description="Helical; Name=1" evidence="1">
    <location>
        <begin position="10"/>
        <end position="30"/>
    </location>
</feature>
<feature type="topological domain" description="Cytoplasmic" evidence="1">
    <location>
        <begin position="31"/>
        <end position="49"/>
    </location>
</feature>
<feature type="transmembrane region" description="Helical; Name=2" evidence="1">
    <location>
        <begin position="50"/>
        <end position="70"/>
    </location>
</feature>
<feature type="topological domain" description="Extracellular" evidence="1">
    <location>
        <begin position="71"/>
        <end position="101"/>
    </location>
</feature>
<feature type="transmembrane region" description="Helical; Name=3" evidence="1">
    <location>
        <begin position="102"/>
        <end position="122"/>
    </location>
</feature>
<feature type="topological domain" description="Cytoplasmic" evidence="1">
    <location>
        <begin position="123"/>
        <end position="128"/>
    </location>
</feature>
<feature type="transmembrane region" description="Helical; Name=4" evidence="1">
    <location>
        <begin position="129"/>
        <end position="149"/>
    </location>
</feature>
<feature type="topological domain" description="Extracellular" evidence="1">
    <location>
        <begin position="150"/>
        <end position="187"/>
    </location>
</feature>
<feature type="transmembrane region" description="Helical; Name=5" evidence="1">
    <location>
        <begin position="188"/>
        <end position="208"/>
    </location>
</feature>
<feature type="topological domain" description="Cytoplasmic" evidence="1">
    <location>
        <begin position="209"/>
        <end position="235"/>
    </location>
</feature>
<feature type="transmembrane region" description="Helical; Name=6" evidence="1">
    <location>
        <begin position="236"/>
        <end position="256"/>
    </location>
</feature>
<feature type="topological domain" description="Extracellular" evidence="1">
    <location>
        <begin position="257"/>
        <end position="266"/>
    </location>
</feature>
<feature type="transmembrane region" description="Helical; Name=7" evidence="1">
    <location>
        <begin position="267"/>
        <end position="287"/>
    </location>
</feature>
<feature type="topological domain" description="Cytoplasmic" evidence="1">
    <location>
        <begin position="288"/>
        <end position="312"/>
    </location>
</feature>
<feature type="glycosylation site" description="N-linked (GlcNAc...) asparagine" evidence="1">
    <location>
        <position position="151"/>
    </location>
</feature>
<feature type="glycosylation site" description="N-linked (GlcNAc...) asparagine" evidence="1">
    <location>
        <position position="167"/>
    </location>
</feature>
<feature type="sequence conflict" description="In Ref. 5; AAL85200." evidence="2" ref="5">
    <original>C</original>
    <variation>G</variation>
    <location>
        <position position="66"/>
    </location>
</feature>
<feature type="sequence conflict" description="In Ref. 5; AAL85200." evidence="2" ref="5">
    <original>TV</original>
    <variation>II</variation>
    <location>
        <begin position="84"/>
        <end position="85"/>
    </location>
</feature>
<feature type="sequence conflict" description="In Ref. 5; AAL85200." evidence="2" ref="5">
    <original>YL</original>
    <variation>HF</variation>
    <location>
        <begin position="107"/>
        <end position="108"/>
    </location>
</feature>
<feature type="sequence conflict" description="In Ref. 5; AAL85200." evidence="2" ref="5">
    <original>VII</original>
    <variation>LIL</variation>
    <location>
        <begin position="138"/>
        <end position="140"/>
    </location>
</feature>
<feature type="sequence conflict" description="In Ref. 5; AAL85200." evidence="2" ref="5">
    <original>S</original>
    <variation>T</variation>
    <location>
        <position position="153"/>
    </location>
</feature>
<feature type="sequence conflict" description="In Ref. 5; AAL85200." evidence="2" ref="5">
    <original>V</original>
    <variation>L</variation>
    <location>
        <position position="174"/>
    </location>
</feature>
<feature type="sequence conflict" description="In Ref. 5; AAL85200." evidence="2" ref="5">
    <original>H</original>
    <variation>Y</variation>
    <location>
        <position position="179"/>
    </location>
</feature>
<feature type="sequence conflict" description="In Ref. 5; AAL85200." evidence="2" ref="5">
    <original>I</original>
    <variation>M</variation>
    <location>
        <position position="215"/>
    </location>
</feature>
<feature type="sequence conflict" description="In Ref. 5; AAL85200." evidence="2" ref="5">
    <original>S</original>
    <variation>N</variation>
    <location>
        <position position="218"/>
    </location>
</feature>
<feature type="sequence conflict" description="In Ref. 5; AAL85200." evidence="2" ref="5">
    <original>K</original>
    <variation>N</variation>
    <location>
        <position position="223"/>
    </location>
</feature>
<feature type="sequence conflict" description="In Ref. 5; AAL85200." evidence="2" ref="5">
    <original>M</original>
    <variation>T</variation>
    <location>
        <position position="234"/>
    </location>
</feature>
<feature type="sequence conflict" description="In Ref. 5; AAL85200." evidence="2" ref="5">
    <original>A</original>
    <variation>V</variation>
    <location>
        <position position="242"/>
    </location>
</feature>
<feature type="sequence conflict" description="In Ref. 5; AAL85200." evidence="2" ref="5">
    <original>V</original>
    <variation>I</variation>
    <location>
        <position position="245"/>
    </location>
</feature>
<reference key="1">
    <citation type="journal article" date="2003" name="Immunogenetics">
        <title>Molecular genetic characterization of the distal NKC recombination hotspot and putative murine CMV resistance control locus.</title>
        <authorList>
            <person name="Scalzo A.A."/>
            <person name="Wheat R."/>
            <person name="Dubbelde C."/>
            <person name="Stone L."/>
            <person name="Clark P."/>
            <person name="Du Y."/>
            <person name="Dong N."/>
            <person name="Stoll J."/>
            <person name="Yokoyama W.M."/>
            <person name="Brown M.G."/>
        </authorList>
    </citation>
    <scope>NUCLEOTIDE SEQUENCE [GENOMIC DNA]</scope>
</reference>
<reference key="2">
    <citation type="patent" date="2001-03-15" number="WO0118050">
        <title>T2r taste receptor family.</title>
        <authorList>
            <person name="Zuker C.S."/>
            <person name="Adler J.E."/>
            <person name="Ryba N."/>
            <person name="Mueller K."/>
            <person name="Hoon M."/>
        </authorList>
    </citation>
    <scope>NUCLEOTIDE SEQUENCE [GENOMIC DNA]</scope>
</reference>
<reference key="3">
    <citation type="journal article" date="2009" name="PLoS Biol.">
        <title>Lineage-specific biology revealed by a finished genome assembly of the mouse.</title>
        <authorList>
            <person name="Church D.M."/>
            <person name="Goodstadt L."/>
            <person name="Hillier L.W."/>
            <person name="Zody M.C."/>
            <person name="Goldstein S."/>
            <person name="She X."/>
            <person name="Bult C.J."/>
            <person name="Agarwala R."/>
            <person name="Cherry J.L."/>
            <person name="DiCuccio M."/>
            <person name="Hlavina W."/>
            <person name="Kapustin Y."/>
            <person name="Meric P."/>
            <person name="Maglott D."/>
            <person name="Birtle Z."/>
            <person name="Marques A.C."/>
            <person name="Graves T."/>
            <person name="Zhou S."/>
            <person name="Teague B."/>
            <person name="Potamousis K."/>
            <person name="Churas C."/>
            <person name="Place M."/>
            <person name="Herschleb J."/>
            <person name="Runnheim R."/>
            <person name="Forrest D."/>
            <person name="Amos-Landgraf J."/>
            <person name="Schwartz D.C."/>
            <person name="Cheng Z."/>
            <person name="Lindblad-Toh K."/>
            <person name="Eichler E.E."/>
            <person name="Ponting C.P."/>
        </authorList>
    </citation>
    <scope>NUCLEOTIDE SEQUENCE [LARGE SCALE GENOMIC DNA]</scope>
    <source>
        <strain>C57BL/6J</strain>
    </source>
</reference>
<reference key="4">
    <citation type="journal article" date="2004" name="Genome Res.">
        <title>The status, quality, and expansion of the NIH full-length cDNA project: the Mammalian Gene Collection (MGC).</title>
        <authorList>
            <consortium name="The MGC Project Team"/>
        </authorList>
    </citation>
    <scope>NUCLEOTIDE SEQUENCE [LARGE SCALE MRNA]</scope>
    <source>
        <tissue>Brain</tissue>
    </source>
</reference>
<reference key="5">
    <citation type="journal article" date="2002" name="Proc. Natl. Acad. Sci. U.S.A.">
        <title>Expression of bitter taste receptors of the T2R family in the gastrointestinal tract and enteroendocrine STC-1 cells.</title>
        <authorList>
            <person name="Wu S.V."/>
            <person name="Rozengurt N."/>
            <person name="Yang M."/>
            <person name="Young S.H."/>
            <person name="Sinnett-Smith J."/>
            <person name="Rozengurt E."/>
        </authorList>
    </citation>
    <scope>NUCLEOTIDE SEQUENCE [MRNA] OF 56-280</scope>
</reference>
<reference key="6">
    <citation type="journal article" date="2003" name="Mol. Biol. Evol.">
        <title>Adaptive diversification of bitter taste receptor genes in mammalian evolution.</title>
        <authorList>
            <person name="Shi P."/>
            <person name="Zhang J."/>
            <person name="Yang H."/>
            <person name="Zhang Y.-P."/>
        </authorList>
    </citation>
    <scope>IDENTIFICATION</scope>
</reference>
<reference key="7">
    <citation type="journal article" date="2002" name="Curr. Opin. Neurobiol.">
        <title>Receptors for bitter and sweet taste.</title>
        <authorList>
            <person name="Montmayeur J.-P."/>
            <person name="Matsunami H."/>
        </authorList>
    </citation>
    <scope>REVIEW</scope>
</reference>
<reference key="8">
    <citation type="journal article" date="2002" name="J. Biol. Chem.">
        <title>Molecular mechanisms of bitter and sweet taste transduction.</title>
        <authorList>
            <person name="Margolskee R.F."/>
        </authorList>
    </citation>
    <scope>REVIEW</scope>
</reference>
<reference key="9">
    <citation type="journal article" date="2003" name="Cell">
        <title>Coding of sweet, bitter, and umami tastes: different receptor cells sharing similar signaling pathways.</title>
        <authorList>
            <person name="Zhang Y."/>
            <person name="Hoon M.A."/>
            <person name="Chandrashekar J."/>
            <person name="Mueller K.L."/>
            <person name="Cook B."/>
            <person name="Wu D."/>
            <person name="Zuker C.S."/>
            <person name="Ryba N.J."/>
        </authorList>
    </citation>
    <scope>REVIEW</scope>
</reference>
<protein>
    <recommendedName>
        <fullName>Taste receptor type 2 member 7</fullName>
        <shortName>T2R7</shortName>
    </recommendedName>
    <alternativeName>
        <fullName>STC7-4</fullName>
    </alternativeName>
    <alternativeName>
        <fullName>T2R30</fullName>
    </alternativeName>
    <alternativeName>
        <fullName>T2R6</fullName>
    </alternativeName>
    <alternativeName>
        <fullName>mT2R42</fullName>
    </alternativeName>
</protein>
<proteinExistence type="evidence at transcript level"/>
<name>TA2R7_MOUSE</name>
<accession>P59530</accession>
<accession>Q0VE81</accession>
<accession>Q7M726</accession>
<evidence type="ECO:0000255" key="1"/>
<evidence type="ECO:0000305" key="2"/>
<dbReference type="EMBL" id="AF462604">
    <property type="protein sequence ID" value="AAO14564.1"/>
    <property type="molecule type" value="Genomic_DNA"/>
</dbReference>
<dbReference type="EMBL" id="AX097857">
    <property type="status" value="NOT_ANNOTATED_CDS"/>
    <property type="molecule type" value="Genomic_DNA"/>
</dbReference>
<dbReference type="EMBL" id="AC140204">
    <property type="status" value="NOT_ANNOTATED_CDS"/>
    <property type="molecule type" value="Genomic_DNA"/>
</dbReference>
<dbReference type="EMBL" id="BC119329">
    <property type="protein sequence ID" value="AAI19330.1"/>
    <property type="molecule type" value="mRNA"/>
</dbReference>
<dbReference type="EMBL" id="AF412303">
    <property type="protein sequence ID" value="AAL85200.1"/>
    <property type="molecule type" value="mRNA"/>
</dbReference>
<dbReference type="EMBL" id="BK001071">
    <property type="protein sequence ID" value="DAA01210.1"/>
    <property type="molecule type" value="Genomic_DNA"/>
</dbReference>
<dbReference type="CCDS" id="CCDS20608.1"/>
<dbReference type="RefSeq" id="NP_954607.1">
    <property type="nucleotide sequence ID" value="NM_199156.1"/>
</dbReference>
<dbReference type="SMR" id="P59530"/>
<dbReference type="FunCoup" id="P59530">
    <property type="interactions" value="129"/>
</dbReference>
<dbReference type="STRING" id="10090.ENSMUSP00000063954"/>
<dbReference type="GlyCosmos" id="P59530">
    <property type="glycosylation" value="2 sites, No reported glycans"/>
</dbReference>
<dbReference type="GlyGen" id="P59530">
    <property type="glycosylation" value="2 sites"/>
</dbReference>
<dbReference type="PhosphoSitePlus" id="P59530"/>
<dbReference type="PaxDb" id="10090-ENSMUSP00000063954"/>
<dbReference type="Antibodypedia" id="23392">
    <property type="antibodies" value="131 antibodies from 22 providers"/>
</dbReference>
<dbReference type="DNASU" id="387355"/>
<dbReference type="Ensembl" id="ENSMUST00000067597.5">
    <property type="protein sequence ID" value="ENSMUSP00000063954.5"/>
    <property type="gene ID" value="ENSMUSG00000054497.6"/>
</dbReference>
<dbReference type="GeneID" id="387355"/>
<dbReference type="KEGG" id="mmu:387355"/>
<dbReference type="UCSC" id="uc009eiv.1">
    <property type="organism name" value="mouse"/>
</dbReference>
<dbReference type="AGR" id="MGI:2681278"/>
<dbReference type="CTD" id="387355"/>
<dbReference type="MGI" id="MGI:2681278">
    <property type="gene designation" value="Tas2r130"/>
</dbReference>
<dbReference type="VEuPathDB" id="HostDB:ENSMUSG00000054497"/>
<dbReference type="eggNOG" id="ENOG502SKRK">
    <property type="taxonomic scope" value="Eukaryota"/>
</dbReference>
<dbReference type="GeneTree" id="ENSGT01100000263477"/>
<dbReference type="HOGENOM" id="CLU_072337_3_0_1"/>
<dbReference type="InParanoid" id="P59530"/>
<dbReference type="OMA" id="WRIDRVI"/>
<dbReference type="OrthoDB" id="8876749at2759"/>
<dbReference type="PhylomeDB" id="P59530"/>
<dbReference type="TreeFam" id="TF335891"/>
<dbReference type="Reactome" id="R-MMU-418594">
    <property type="pathway name" value="G alpha (i) signalling events"/>
</dbReference>
<dbReference type="Reactome" id="R-MMU-420499">
    <property type="pathway name" value="Class C/3 (Metabotropic glutamate/pheromone receptors)"/>
</dbReference>
<dbReference type="Reactome" id="R-MMU-9717207">
    <property type="pathway name" value="Sensory perception of sweet, bitter, and umami (glutamate) taste"/>
</dbReference>
<dbReference type="BioGRID-ORCS" id="387355">
    <property type="hits" value="3 hits in 76 CRISPR screens"/>
</dbReference>
<dbReference type="PRO" id="PR:P59530"/>
<dbReference type="Proteomes" id="UP000000589">
    <property type="component" value="Chromosome 6"/>
</dbReference>
<dbReference type="RNAct" id="P59530">
    <property type="molecule type" value="protein"/>
</dbReference>
<dbReference type="GO" id="GO:0016020">
    <property type="term" value="C:membrane"/>
    <property type="evidence" value="ECO:0007669"/>
    <property type="project" value="UniProtKB-SubCell"/>
</dbReference>
<dbReference type="GO" id="GO:0033038">
    <property type="term" value="F:bitter taste receptor activity"/>
    <property type="evidence" value="ECO:0007669"/>
    <property type="project" value="Ensembl"/>
</dbReference>
<dbReference type="GO" id="GO:0004930">
    <property type="term" value="F:G protein-coupled receptor activity"/>
    <property type="evidence" value="ECO:0007669"/>
    <property type="project" value="UniProtKB-KW"/>
</dbReference>
<dbReference type="GO" id="GO:0001580">
    <property type="term" value="P:detection of chemical stimulus involved in sensory perception of bitter taste"/>
    <property type="evidence" value="ECO:0000304"/>
    <property type="project" value="MGI"/>
</dbReference>
<dbReference type="CDD" id="cd15023">
    <property type="entry name" value="7tm_TAS2R7-like"/>
    <property type="match status" value="1"/>
</dbReference>
<dbReference type="FunFam" id="1.20.1070.10:FF:000042">
    <property type="entry name" value="Taste receptor type 2 member 7"/>
    <property type="match status" value="1"/>
</dbReference>
<dbReference type="Gene3D" id="1.20.1070.10">
    <property type="entry name" value="Rhodopsin 7-helix transmembrane proteins"/>
    <property type="match status" value="1"/>
</dbReference>
<dbReference type="InterPro" id="IPR017452">
    <property type="entry name" value="GPCR_Rhodpsn_7TM"/>
</dbReference>
<dbReference type="InterPro" id="IPR007960">
    <property type="entry name" value="TAS2R"/>
</dbReference>
<dbReference type="PANTHER" id="PTHR11394">
    <property type="entry name" value="TASTE RECEPTOR TYPE 2"/>
    <property type="match status" value="1"/>
</dbReference>
<dbReference type="PANTHER" id="PTHR11394:SF58">
    <property type="entry name" value="TASTE RECEPTOR TYPE 2 MEMBER 7"/>
    <property type="match status" value="1"/>
</dbReference>
<dbReference type="Pfam" id="PF05296">
    <property type="entry name" value="TAS2R"/>
    <property type="match status" value="1"/>
</dbReference>
<dbReference type="SUPFAM" id="SSF81321">
    <property type="entry name" value="Family A G protein-coupled receptor-like"/>
    <property type="match status" value="1"/>
</dbReference>
<dbReference type="PROSITE" id="PS50262">
    <property type="entry name" value="G_PROTEIN_RECEP_F1_2"/>
    <property type="match status" value="1"/>
</dbReference>
<gene>
    <name type="primary">Tas2r7</name>
    <name type="synonym">Tas2r130</name>
    <name type="synonym">Tas2r6</name>
</gene>